<reference key="1">
    <citation type="journal article" date="2005" name="PLoS Biol.">
        <title>Major structural differences and novel potential virulence mechanisms from the genomes of multiple Campylobacter species.</title>
        <authorList>
            <person name="Fouts D.E."/>
            <person name="Mongodin E.F."/>
            <person name="Mandrell R.E."/>
            <person name="Miller W.G."/>
            <person name="Rasko D.A."/>
            <person name="Ravel J."/>
            <person name="Brinkac L.M."/>
            <person name="DeBoy R.T."/>
            <person name="Parker C.T."/>
            <person name="Daugherty S.C."/>
            <person name="Dodson R.J."/>
            <person name="Durkin A.S."/>
            <person name="Madupu R."/>
            <person name="Sullivan S.A."/>
            <person name="Shetty J.U."/>
            <person name="Ayodeji M.A."/>
            <person name="Shvartsbeyn A."/>
            <person name="Schatz M.C."/>
            <person name="Badger J.H."/>
            <person name="Fraser C.M."/>
            <person name="Nelson K.E."/>
        </authorList>
    </citation>
    <scope>NUCLEOTIDE SEQUENCE [LARGE SCALE GENOMIC DNA]</scope>
    <source>
        <strain>RM1221</strain>
    </source>
</reference>
<proteinExistence type="inferred from homology"/>
<accession>Q5HSF8</accession>
<sequence>MKNIEKLERSLTYEFKDKNLLIHALTHKSFKKSYNNERLEFLGDAVLDLVVGEYLFHKFAKDAEGDLSKLRAALVNEKSFAKIANSLNLGDFIFMSVAEENNGGREKPSILSDALEAIIGAIHLEAGFEFTKTIALRLIEKNFPQIDAKILIKDYKTKLQEITQGKIGQTPQYETVRAFGPDHLKQFEIALMLDGKELARAIAGSKKEAQQMAAKIALEKLGAL</sequence>
<gene>
    <name evidence="1" type="primary">rnc</name>
    <name type="ordered locus">CJE1807</name>
</gene>
<keyword id="KW-0963">Cytoplasm</keyword>
<keyword id="KW-0255">Endonuclease</keyword>
<keyword id="KW-0378">Hydrolase</keyword>
<keyword id="KW-0460">Magnesium</keyword>
<keyword id="KW-0479">Metal-binding</keyword>
<keyword id="KW-0507">mRNA processing</keyword>
<keyword id="KW-0540">Nuclease</keyword>
<keyword id="KW-0694">RNA-binding</keyword>
<keyword id="KW-0698">rRNA processing</keyword>
<keyword id="KW-0699">rRNA-binding</keyword>
<keyword id="KW-0819">tRNA processing</keyword>
<protein>
    <recommendedName>
        <fullName evidence="1">Ribonuclease 3</fullName>
        <ecNumber evidence="1">3.1.26.3</ecNumber>
    </recommendedName>
    <alternativeName>
        <fullName evidence="1">Ribonuclease III</fullName>
        <shortName evidence="1">RNase III</shortName>
    </alternativeName>
</protein>
<comment type="function">
    <text evidence="1">Digests double-stranded RNA. Involved in the processing of primary rRNA transcript to yield the immediate precursors to the large and small rRNAs (23S and 16S). Processes some mRNAs, and tRNAs when they are encoded in the rRNA operon. Processes pre-crRNA and tracrRNA of type II CRISPR loci if present in the organism.</text>
</comment>
<comment type="catalytic activity">
    <reaction evidence="1">
        <text>Endonucleolytic cleavage to 5'-phosphomonoester.</text>
        <dbReference type="EC" id="3.1.26.3"/>
    </reaction>
</comment>
<comment type="cofactor">
    <cofactor evidence="1">
        <name>Mg(2+)</name>
        <dbReference type="ChEBI" id="CHEBI:18420"/>
    </cofactor>
</comment>
<comment type="subunit">
    <text evidence="1">Homodimer.</text>
</comment>
<comment type="subcellular location">
    <subcellularLocation>
        <location evidence="1">Cytoplasm</location>
    </subcellularLocation>
</comment>
<comment type="similarity">
    <text evidence="1">Belongs to the ribonuclease III family.</text>
</comment>
<feature type="chain" id="PRO_0000228511" description="Ribonuclease 3">
    <location>
        <begin position="1"/>
        <end position="224"/>
    </location>
</feature>
<feature type="domain" description="RNase III" evidence="1">
    <location>
        <begin position="4"/>
        <end position="127"/>
    </location>
</feature>
<feature type="domain" description="DRBM" evidence="1">
    <location>
        <begin position="154"/>
        <end position="223"/>
    </location>
</feature>
<feature type="active site" evidence="1">
    <location>
        <position position="44"/>
    </location>
</feature>
<feature type="active site" evidence="1">
    <location>
        <position position="116"/>
    </location>
</feature>
<feature type="binding site" evidence="1">
    <location>
        <position position="40"/>
    </location>
    <ligand>
        <name>Mg(2+)</name>
        <dbReference type="ChEBI" id="CHEBI:18420"/>
    </ligand>
</feature>
<feature type="binding site" evidence="1">
    <location>
        <position position="113"/>
    </location>
    <ligand>
        <name>Mg(2+)</name>
        <dbReference type="ChEBI" id="CHEBI:18420"/>
    </ligand>
</feature>
<feature type="binding site" evidence="1">
    <location>
        <position position="116"/>
    </location>
    <ligand>
        <name>Mg(2+)</name>
        <dbReference type="ChEBI" id="CHEBI:18420"/>
    </ligand>
</feature>
<name>RNC_CAMJR</name>
<evidence type="ECO:0000255" key="1">
    <source>
        <dbReference type="HAMAP-Rule" id="MF_00104"/>
    </source>
</evidence>
<dbReference type="EC" id="3.1.26.3" evidence="1"/>
<dbReference type="EMBL" id="CP000025">
    <property type="protein sequence ID" value="AAW36229.1"/>
    <property type="molecule type" value="Genomic_DNA"/>
</dbReference>
<dbReference type="RefSeq" id="WP_011050008.1">
    <property type="nucleotide sequence ID" value="NC_003912.7"/>
</dbReference>
<dbReference type="SMR" id="Q5HSF8"/>
<dbReference type="KEGG" id="cjr:CJE1807"/>
<dbReference type="HOGENOM" id="CLU_000907_1_3_7"/>
<dbReference type="GO" id="GO:0005737">
    <property type="term" value="C:cytoplasm"/>
    <property type="evidence" value="ECO:0007669"/>
    <property type="project" value="UniProtKB-SubCell"/>
</dbReference>
<dbReference type="GO" id="GO:0003725">
    <property type="term" value="F:double-stranded RNA binding"/>
    <property type="evidence" value="ECO:0007669"/>
    <property type="project" value="TreeGrafter"/>
</dbReference>
<dbReference type="GO" id="GO:0046872">
    <property type="term" value="F:metal ion binding"/>
    <property type="evidence" value="ECO:0007669"/>
    <property type="project" value="UniProtKB-KW"/>
</dbReference>
<dbReference type="GO" id="GO:0004525">
    <property type="term" value="F:ribonuclease III activity"/>
    <property type="evidence" value="ECO:0007669"/>
    <property type="project" value="UniProtKB-UniRule"/>
</dbReference>
<dbReference type="GO" id="GO:0019843">
    <property type="term" value="F:rRNA binding"/>
    <property type="evidence" value="ECO:0007669"/>
    <property type="project" value="UniProtKB-KW"/>
</dbReference>
<dbReference type="GO" id="GO:0006397">
    <property type="term" value="P:mRNA processing"/>
    <property type="evidence" value="ECO:0007669"/>
    <property type="project" value="UniProtKB-UniRule"/>
</dbReference>
<dbReference type="GO" id="GO:0010468">
    <property type="term" value="P:regulation of gene expression"/>
    <property type="evidence" value="ECO:0007669"/>
    <property type="project" value="TreeGrafter"/>
</dbReference>
<dbReference type="GO" id="GO:0006364">
    <property type="term" value="P:rRNA processing"/>
    <property type="evidence" value="ECO:0007669"/>
    <property type="project" value="UniProtKB-UniRule"/>
</dbReference>
<dbReference type="GO" id="GO:0008033">
    <property type="term" value="P:tRNA processing"/>
    <property type="evidence" value="ECO:0007669"/>
    <property type="project" value="UniProtKB-KW"/>
</dbReference>
<dbReference type="CDD" id="cd10845">
    <property type="entry name" value="DSRM_RNAse_III_family"/>
    <property type="match status" value="1"/>
</dbReference>
<dbReference type="CDD" id="cd00593">
    <property type="entry name" value="RIBOc"/>
    <property type="match status" value="1"/>
</dbReference>
<dbReference type="FunFam" id="1.10.1520.10:FF:000001">
    <property type="entry name" value="Ribonuclease 3"/>
    <property type="match status" value="1"/>
</dbReference>
<dbReference type="Gene3D" id="3.30.160.20">
    <property type="match status" value="1"/>
</dbReference>
<dbReference type="Gene3D" id="1.10.1520.10">
    <property type="entry name" value="Ribonuclease III domain"/>
    <property type="match status" value="1"/>
</dbReference>
<dbReference type="HAMAP" id="MF_00104">
    <property type="entry name" value="RNase_III"/>
    <property type="match status" value="1"/>
</dbReference>
<dbReference type="InterPro" id="IPR014720">
    <property type="entry name" value="dsRBD_dom"/>
</dbReference>
<dbReference type="InterPro" id="IPR011907">
    <property type="entry name" value="RNase_III"/>
</dbReference>
<dbReference type="InterPro" id="IPR000999">
    <property type="entry name" value="RNase_III_dom"/>
</dbReference>
<dbReference type="InterPro" id="IPR036389">
    <property type="entry name" value="RNase_III_sf"/>
</dbReference>
<dbReference type="NCBIfam" id="TIGR02191">
    <property type="entry name" value="RNaseIII"/>
    <property type="match status" value="1"/>
</dbReference>
<dbReference type="PANTHER" id="PTHR11207:SF0">
    <property type="entry name" value="RIBONUCLEASE 3"/>
    <property type="match status" value="1"/>
</dbReference>
<dbReference type="PANTHER" id="PTHR11207">
    <property type="entry name" value="RIBONUCLEASE III"/>
    <property type="match status" value="1"/>
</dbReference>
<dbReference type="Pfam" id="PF00035">
    <property type="entry name" value="dsrm"/>
    <property type="match status" value="1"/>
</dbReference>
<dbReference type="Pfam" id="PF14622">
    <property type="entry name" value="Ribonucleas_3_3"/>
    <property type="match status" value="1"/>
</dbReference>
<dbReference type="SMART" id="SM00358">
    <property type="entry name" value="DSRM"/>
    <property type="match status" value="1"/>
</dbReference>
<dbReference type="SMART" id="SM00535">
    <property type="entry name" value="RIBOc"/>
    <property type="match status" value="1"/>
</dbReference>
<dbReference type="SUPFAM" id="SSF54768">
    <property type="entry name" value="dsRNA-binding domain-like"/>
    <property type="match status" value="1"/>
</dbReference>
<dbReference type="SUPFAM" id="SSF69065">
    <property type="entry name" value="RNase III domain-like"/>
    <property type="match status" value="1"/>
</dbReference>
<dbReference type="PROSITE" id="PS50137">
    <property type="entry name" value="DS_RBD"/>
    <property type="match status" value="1"/>
</dbReference>
<dbReference type="PROSITE" id="PS00517">
    <property type="entry name" value="RNASE_3_1"/>
    <property type="match status" value="1"/>
</dbReference>
<dbReference type="PROSITE" id="PS50142">
    <property type="entry name" value="RNASE_3_2"/>
    <property type="match status" value="1"/>
</dbReference>
<organism>
    <name type="scientific">Campylobacter jejuni (strain RM1221)</name>
    <dbReference type="NCBI Taxonomy" id="195099"/>
    <lineage>
        <taxon>Bacteria</taxon>
        <taxon>Pseudomonadati</taxon>
        <taxon>Campylobacterota</taxon>
        <taxon>Epsilonproteobacteria</taxon>
        <taxon>Campylobacterales</taxon>
        <taxon>Campylobacteraceae</taxon>
        <taxon>Campylobacter</taxon>
    </lineage>
</organism>